<dbReference type="GO" id="GO:0005576">
    <property type="term" value="C:extracellular region"/>
    <property type="evidence" value="ECO:0007669"/>
    <property type="project" value="UniProtKB-SubCell"/>
</dbReference>
<dbReference type="GO" id="GO:0090729">
    <property type="term" value="F:toxin activity"/>
    <property type="evidence" value="ECO:0007669"/>
    <property type="project" value="UniProtKB-KW"/>
</dbReference>
<sequence length="56" mass="5999">MSGSGAMLLGLLILVAMATSLDTREICWNHSECDDPSEWCCRMGSGHGSCLPVCRP</sequence>
<name>C61A_CONCL</name>
<comment type="function">
    <text evidence="3">Probable neurotoxin.</text>
</comment>
<comment type="subcellular location">
    <subcellularLocation>
        <location evidence="4">Secreted</location>
    </subcellularLocation>
</comment>
<comment type="tissue specificity">
    <text evidence="4">Expressed by the venom duct.</text>
</comment>
<comment type="domain">
    <text evidence="3">The cysteine framework is VI/VII (C-C-CC-C-C).</text>
</comment>
<comment type="domain">
    <text evidence="3">The presence of a 'disulfide through disulfide knot' structurally defines this protein as a knottin.</text>
</comment>
<accession>P0DUA3</accession>
<protein>
    <recommendedName>
        <fullName evidence="3">Conotoxin Cal6.41a</fullName>
    </recommendedName>
    <alternativeName>
        <fullName evidence="2">O3_cal6.1a</fullName>
    </alternativeName>
</protein>
<reference key="1">
    <citation type="journal article" date="2019" name="Toxins">
        <title>The diversified O-superfamily in Californiconus californicus presents a conotoxin with antimycobacterial activity.</title>
        <authorList>
            <person name="Bernaldez-Sarabia J."/>
            <person name="Figueroa-Montiel A."/>
            <person name="Duenas S."/>
            <person name="Cervantes-Luevano K."/>
            <person name="Beltran J.A."/>
            <person name="Ortiz E."/>
            <person name="Jimenez S."/>
            <person name="Possani L.D."/>
            <person name="Paniagua-Solis J.F."/>
            <person name="Gonzalez-Canudas J."/>
            <person name="Licea-Navarro A."/>
        </authorList>
    </citation>
    <scope>NUCLEOTIDE SEQUENCE [MRNA]</scope>
    <source>
        <tissue>Venom duct</tissue>
    </source>
</reference>
<keyword id="KW-1015">Disulfide bond</keyword>
<keyword id="KW-0960">Knottin</keyword>
<keyword id="KW-0528">Neurotoxin</keyword>
<keyword id="KW-0964">Secreted</keyword>
<keyword id="KW-0732">Signal</keyword>
<keyword id="KW-0800">Toxin</keyword>
<organism>
    <name type="scientific">Californiconus californicus</name>
    <name type="common">California cone</name>
    <name type="synonym">Conus californicus</name>
    <dbReference type="NCBI Taxonomy" id="1736779"/>
    <lineage>
        <taxon>Eukaryota</taxon>
        <taxon>Metazoa</taxon>
        <taxon>Spiralia</taxon>
        <taxon>Lophotrochozoa</taxon>
        <taxon>Mollusca</taxon>
        <taxon>Gastropoda</taxon>
        <taxon>Caenogastropoda</taxon>
        <taxon>Neogastropoda</taxon>
        <taxon>Conoidea</taxon>
        <taxon>Conidae</taxon>
        <taxon>Californiconus</taxon>
    </lineage>
</organism>
<proteinExistence type="inferred from homology"/>
<evidence type="ECO:0000255" key="1"/>
<evidence type="ECO:0000303" key="2">
    <source>
    </source>
</evidence>
<evidence type="ECO:0000305" key="3"/>
<evidence type="ECO:0000305" key="4">
    <source>
    </source>
</evidence>
<feature type="signal peptide" evidence="1">
    <location>
        <begin position="1"/>
        <end position="23"/>
    </location>
</feature>
<feature type="chain" id="PRO_0000450985" description="Conotoxin Cal6.41a" evidence="3">
    <location>
        <begin position="24"/>
        <end position="56"/>
    </location>
</feature>
<feature type="disulfide bond" evidence="3">
    <location>
        <begin position="27"/>
        <end position="41"/>
    </location>
</feature>
<feature type="disulfide bond" evidence="3">
    <location>
        <begin position="33"/>
        <end position="50"/>
    </location>
</feature>
<feature type="disulfide bond" evidence="3">
    <location>
        <begin position="40"/>
        <end position="54"/>
    </location>
</feature>